<feature type="chain" id="PRO_0000242552" description="UDP-N-acetylmuramate--L-alanine ligase">
    <location>
        <begin position="1"/>
        <end position="503"/>
    </location>
</feature>
<feature type="region of interest" description="Disordered" evidence="2">
    <location>
        <begin position="1"/>
        <end position="22"/>
    </location>
</feature>
<feature type="compositionally biased region" description="Low complexity" evidence="2">
    <location>
        <begin position="8"/>
        <end position="18"/>
    </location>
</feature>
<feature type="binding site" evidence="1">
    <location>
        <begin position="135"/>
        <end position="141"/>
    </location>
    <ligand>
        <name>ATP</name>
        <dbReference type="ChEBI" id="CHEBI:30616"/>
    </ligand>
</feature>
<dbReference type="EC" id="6.3.2.8" evidence="1"/>
<dbReference type="EMBL" id="CP000083">
    <property type="protein sequence ID" value="AAZ28642.1"/>
    <property type="molecule type" value="Genomic_DNA"/>
</dbReference>
<dbReference type="RefSeq" id="WP_011045193.1">
    <property type="nucleotide sequence ID" value="NC_003910.7"/>
</dbReference>
<dbReference type="SMR" id="Q47VR0"/>
<dbReference type="STRING" id="167879.CPS_4464"/>
<dbReference type="KEGG" id="cps:CPS_4464"/>
<dbReference type="eggNOG" id="COG0773">
    <property type="taxonomic scope" value="Bacteria"/>
</dbReference>
<dbReference type="HOGENOM" id="CLU_028104_2_2_6"/>
<dbReference type="UniPathway" id="UPA00219"/>
<dbReference type="Proteomes" id="UP000000547">
    <property type="component" value="Chromosome"/>
</dbReference>
<dbReference type="GO" id="GO:0005737">
    <property type="term" value="C:cytoplasm"/>
    <property type="evidence" value="ECO:0007669"/>
    <property type="project" value="UniProtKB-SubCell"/>
</dbReference>
<dbReference type="GO" id="GO:0005524">
    <property type="term" value="F:ATP binding"/>
    <property type="evidence" value="ECO:0007669"/>
    <property type="project" value="UniProtKB-UniRule"/>
</dbReference>
<dbReference type="GO" id="GO:0008763">
    <property type="term" value="F:UDP-N-acetylmuramate-L-alanine ligase activity"/>
    <property type="evidence" value="ECO:0007669"/>
    <property type="project" value="UniProtKB-UniRule"/>
</dbReference>
<dbReference type="GO" id="GO:0051301">
    <property type="term" value="P:cell division"/>
    <property type="evidence" value="ECO:0007669"/>
    <property type="project" value="UniProtKB-KW"/>
</dbReference>
<dbReference type="GO" id="GO:0071555">
    <property type="term" value="P:cell wall organization"/>
    <property type="evidence" value="ECO:0007669"/>
    <property type="project" value="UniProtKB-KW"/>
</dbReference>
<dbReference type="GO" id="GO:0009252">
    <property type="term" value="P:peptidoglycan biosynthetic process"/>
    <property type="evidence" value="ECO:0007669"/>
    <property type="project" value="UniProtKB-UniRule"/>
</dbReference>
<dbReference type="GO" id="GO:0008360">
    <property type="term" value="P:regulation of cell shape"/>
    <property type="evidence" value="ECO:0007669"/>
    <property type="project" value="UniProtKB-KW"/>
</dbReference>
<dbReference type="FunFam" id="3.40.1190.10:FF:000001">
    <property type="entry name" value="UDP-N-acetylmuramate--L-alanine ligase"/>
    <property type="match status" value="1"/>
</dbReference>
<dbReference type="FunFam" id="3.40.50.720:FF:000046">
    <property type="entry name" value="UDP-N-acetylmuramate--L-alanine ligase"/>
    <property type="match status" value="1"/>
</dbReference>
<dbReference type="Gene3D" id="3.90.190.20">
    <property type="entry name" value="Mur ligase, C-terminal domain"/>
    <property type="match status" value="1"/>
</dbReference>
<dbReference type="Gene3D" id="3.40.1190.10">
    <property type="entry name" value="Mur-like, catalytic domain"/>
    <property type="match status" value="1"/>
</dbReference>
<dbReference type="Gene3D" id="3.40.50.720">
    <property type="entry name" value="NAD(P)-binding Rossmann-like Domain"/>
    <property type="match status" value="1"/>
</dbReference>
<dbReference type="HAMAP" id="MF_00046">
    <property type="entry name" value="MurC"/>
    <property type="match status" value="1"/>
</dbReference>
<dbReference type="InterPro" id="IPR036565">
    <property type="entry name" value="Mur-like_cat_sf"/>
</dbReference>
<dbReference type="InterPro" id="IPR004101">
    <property type="entry name" value="Mur_ligase_C"/>
</dbReference>
<dbReference type="InterPro" id="IPR036615">
    <property type="entry name" value="Mur_ligase_C_dom_sf"/>
</dbReference>
<dbReference type="InterPro" id="IPR013221">
    <property type="entry name" value="Mur_ligase_cen"/>
</dbReference>
<dbReference type="InterPro" id="IPR000713">
    <property type="entry name" value="Mur_ligase_N"/>
</dbReference>
<dbReference type="InterPro" id="IPR050061">
    <property type="entry name" value="MurCDEF_pg_biosynth"/>
</dbReference>
<dbReference type="InterPro" id="IPR005758">
    <property type="entry name" value="UDP-N-AcMur_Ala_ligase_MurC"/>
</dbReference>
<dbReference type="NCBIfam" id="TIGR01082">
    <property type="entry name" value="murC"/>
    <property type="match status" value="1"/>
</dbReference>
<dbReference type="PANTHER" id="PTHR43445:SF3">
    <property type="entry name" value="UDP-N-ACETYLMURAMATE--L-ALANINE LIGASE"/>
    <property type="match status" value="1"/>
</dbReference>
<dbReference type="PANTHER" id="PTHR43445">
    <property type="entry name" value="UDP-N-ACETYLMURAMATE--L-ALANINE LIGASE-RELATED"/>
    <property type="match status" value="1"/>
</dbReference>
<dbReference type="Pfam" id="PF01225">
    <property type="entry name" value="Mur_ligase"/>
    <property type="match status" value="1"/>
</dbReference>
<dbReference type="Pfam" id="PF02875">
    <property type="entry name" value="Mur_ligase_C"/>
    <property type="match status" value="1"/>
</dbReference>
<dbReference type="Pfam" id="PF08245">
    <property type="entry name" value="Mur_ligase_M"/>
    <property type="match status" value="1"/>
</dbReference>
<dbReference type="SUPFAM" id="SSF51984">
    <property type="entry name" value="MurCD N-terminal domain"/>
    <property type="match status" value="1"/>
</dbReference>
<dbReference type="SUPFAM" id="SSF53623">
    <property type="entry name" value="MurD-like peptide ligases, catalytic domain"/>
    <property type="match status" value="1"/>
</dbReference>
<dbReference type="SUPFAM" id="SSF53244">
    <property type="entry name" value="MurD-like peptide ligases, peptide-binding domain"/>
    <property type="match status" value="1"/>
</dbReference>
<protein>
    <recommendedName>
        <fullName evidence="1">UDP-N-acetylmuramate--L-alanine ligase</fullName>
        <ecNumber evidence="1">6.3.2.8</ecNumber>
    </recommendedName>
    <alternativeName>
        <fullName evidence="1">UDP-N-acetylmuramoyl-L-alanine synthetase</fullName>
    </alternativeName>
</protein>
<gene>
    <name evidence="1" type="primary">murC</name>
    <name type="ordered locus">CPS_4464</name>
</gene>
<proteinExistence type="inferred from homology"/>
<accession>Q47VR0</accession>
<name>MURC_COLP3</name>
<keyword id="KW-0067">ATP-binding</keyword>
<keyword id="KW-0131">Cell cycle</keyword>
<keyword id="KW-0132">Cell division</keyword>
<keyword id="KW-0133">Cell shape</keyword>
<keyword id="KW-0961">Cell wall biogenesis/degradation</keyword>
<keyword id="KW-0963">Cytoplasm</keyword>
<keyword id="KW-0436">Ligase</keyword>
<keyword id="KW-0547">Nucleotide-binding</keyword>
<keyword id="KW-0573">Peptidoglycan synthesis</keyword>
<reference key="1">
    <citation type="journal article" date="2005" name="Proc. Natl. Acad. Sci. U.S.A.">
        <title>The psychrophilic lifestyle as revealed by the genome sequence of Colwellia psychrerythraea 34H through genomic and proteomic analyses.</title>
        <authorList>
            <person name="Methe B.A."/>
            <person name="Nelson K.E."/>
            <person name="Deming J.W."/>
            <person name="Momen B."/>
            <person name="Melamud E."/>
            <person name="Zhang X."/>
            <person name="Moult J."/>
            <person name="Madupu R."/>
            <person name="Nelson W.C."/>
            <person name="Dodson R.J."/>
            <person name="Brinkac L.M."/>
            <person name="Daugherty S.C."/>
            <person name="Durkin A.S."/>
            <person name="DeBoy R.T."/>
            <person name="Kolonay J.F."/>
            <person name="Sullivan S.A."/>
            <person name="Zhou L."/>
            <person name="Davidsen T.M."/>
            <person name="Wu M."/>
            <person name="Huston A.L."/>
            <person name="Lewis M."/>
            <person name="Weaver B."/>
            <person name="Weidman J.F."/>
            <person name="Khouri H."/>
            <person name="Utterback T.R."/>
            <person name="Feldblyum T.V."/>
            <person name="Fraser C.M."/>
        </authorList>
    </citation>
    <scope>NUCLEOTIDE SEQUENCE [LARGE SCALE GENOMIC DNA]</scope>
    <source>
        <strain>34H / ATCC BAA-681</strain>
    </source>
</reference>
<evidence type="ECO:0000255" key="1">
    <source>
        <dbReference type="HAMAP-Rule" id="MF_00046"/>
    </source>
</evidence>
<evidence type="ECO:0000256" key="2">
    <source>
        <dbReference type="SAM" id="MobiDB-lite"/>
    </source>
</evidence>
<sequence>MIKQTHVSNSSNNSTNSTAAQVPEMRRVKRIHFVGIGGAGMGGIAEVLLNEGYQISGSDIGENQVVKRLRALGATIVIGHQAENVVQASVIVVSTAINSENPELVKAKELRIPVVRRAEMLAELMRFRHGIAIAGTHGKTTTTSLIASIFAQGKLDPTFVIGGLLNSAGTNARLGSSRYLVAEADESDASFLHLQPMVSVITNIDADHMETYQGDFEKLKDTYIEFLHNLPFYGLAVVCIDNPVVRELLPRISRQVITYGFSKDADVRAVNYQQNGAVSHFTVEVEGQEPLEMSVNLPGQHNVLNALAGVAVAKDEGVNDEAICKALTEFEGIGRRFEKLTDFSTAAGDMVLVDDYGHHPSEVKATILAMRQGWPDKRLVMVFQPHRYSRTRDLYEDFVEVLSEVDCLFLLDVYAAGETPISSADSKSLARSIRLRGQIEPVYVSDVDKLPQLLATQLQDNDMVITQGAGSIGAVARNLADHSLLHTRCSVQPDAQSEVKGDK</sequence>
<organism>
    <name type="scientific">Colwellia psychrerythraea (strain 34H / ATCC BAA-681)</name>
    <name type="common">Vibrio psychroerythus</name>
    <dbReference type="NCBI Taxonomy" id="167879"/>
    <lineage>
        <taxon>Bacteria</taxon>
        <taxon>Pseudomonadati</taxon>
        <taxon>Pseudomonadota</taxon>
        <taxon>Gammaproteobacteria</taxon>
        <taxon>Alteromonadales</taxon>
        <taxon>Colwelliaceae</taxon>
        <taxon>Colwellia</taxon>
    </lineage>
</organism>
<comment type="function">
    <text evidence="1">Cell wall formation.</text>
</comment>
<comment type="catalytic activity">
    <reaction evidence="1">
        <text>UDP-N-acetyl-alpha-D-muramate + L-alanine + ATP = UDP-N-acetyl-alpha-D-muramoyl-L-alanine + ADP + phosphate + H(+)</text>
        <dbReference type="Rhea" id="RHEA:23372"/>
        <dbReference type="ChEBI" id="CHEBI:15378"/>
        <dbReference type="ChEBI" id="CHEBI:30616"/>
        <dbReference type="ChEBI" id="CHEBI:43474"/>
        <dbReference type="ChEBI" id="CHEBI:57972"/>
        <dbReference type="ChEBI" id="CHEBI:70757"/>
        <dbReference type="ChEBI" id="CHEBI:83898"/>
        <dbReference type="ChEBI" id="CHEBI:456216"/>
        <dbReference type="EC" id="6.3.2.8"/>
    </reaction>
</comment>
<comment type="pathway">
    <text evidence="1">Cell wall biogenesis; peptidoglycan biosynthesis.</text>
</comment>
<comment type="subcellular location">
    <subcellularLocation>
        <location evidence="1">Cytoplasm</location>
    </subcellularLocation>
</comment>
<comment type="similarity">
    <text evidence="1">Belongs to the MurCDEF family.</text>
</comment>